<protein>
    <recommendedName>
        <fullName evidence="1">Shikimate dehydrogenase (NADP(+))</fullName>
        <shortName evidence="1">SDH</shortName>
        <ecNumber evidence="1">1.1.1.25</ecNumber>
    </recommendedName>
</protein>
<comment type="function">
    <text evidence="1">Involved in the biosynthesis of the chorismate, which leads to the biosynthesis of aromatic amino acids. Catalyzes the reversible NADPH linked reduction of 3-dehydroshikimate (DHSA) to yield shikimate (SA).</text>
</comment>
<comment type="catalytic activity">
    <reaction evidence="1">
        <text>shikimate + NADP(+) = 3-dehydroshikimate + NADPH + H(+)</text>
        <dbReference type="Rhea" id="RHEA:17737"/>
        <dbReference type="ChEBI" id="CHEBI:15378"/>
        <dbReference type="ChEBI" id="CHEBI:16630"/>
        <dbReference type="ChEBI" id="CHEBI:36208"/>
        <dbReference type="ChEBI" id="CHEBI:57783"/>
        <dbReference type="ChEBI" id="CHEBI:58349"/>
        <dbReference type="EC" id="1.1.1.25"/>
    </reaction>
</comment>
<comment type="pathway">
    <text evidence="1">Metabolic intermediate biosynthesis; chorismate biosynthesis; chorismate from D-erythrose 4-phosphate and phosphoenolpyruvate: step 4/7.</text>
</comment>
<comment type="subunit">
    <text evidence="1">Homodimer.</text>
</comment>
<comment type="similarity">
    <text evidence="1">Belongs to the shikimate dehydrogenase family.</text>
</comment>
<proteinExistence type="inferred from homology"/>
<organism>
    <name type="scientific">Shewanella sp. (strain MR-4)</name>
    <dbReference type="NCBI Taxonomy" id="60480"/>
    <lineage>
        <taxon>Bacteria</taxon>
        <taxon>Pseudomonadati</taxon>
        <taxon>Pseudomonadota</taxon>
        <taxon>Gammaproteobacteria</taxon>
        <taxon>Alteromonadales</taxon>
        <taxon>Shewanellaceae</taxon>
        <taxon>Shewanella</taxon>
    </lineage>
</organism>
<sequence>MTDMPSVTTPALDRYAVFGNPIGHSKSPIIHGQFASLTLQPLSYEAILAPIDGFEASLRAFFQAGGKGANVTVPFKEQAFALCDSLSAEATLAGAVNTLSLLADGTLYGDNTDGLGLVADLLRHLGSLQHKRVLLVGAGGAARGCILPLLKAEVGQLVITNRTQSKAQALVEIFSQVQQGRYSDKLQAMSMPELSGEFDLVINSTSASLAGELPPLPQSIIGNKTACYDMMYGAKPTAFNQWAVQQGAAQVIDGLGMLVGQAAKSFALWRGVEPDTSGVLKLLRDKLQADAQ</sequence>
<keyword id="KW-0028">Amino-acid biosynthesis</keyword>
<keyword id="KW-0057">Aromatic amino acid biosynthesis</keyword>
<keyword id="KW-0521">NADP</keyword>
<keyword id="KW-0560">Oxidoreductase</keyword>
<dbReference type="EC" id="1.1.1.25" evidence="1"/>
<dbReference type="EMBL" id="CP000446">
    <property type="protein sequence ID" value="ABI37119.1"/>
    <property type="molecule type" value="Genomic_DNA"/>
</dbReference>
<dbReference type="RefSeq" id="WP_011620873.1">
    <property type="nucleotide sequence ID" value="NC_008321.1"/>
</dbReference>
<dbReference type="SMR" id="Q0HP98"/>
<dbReference type="KEGG" id="she:Shewmr4_0037"/>
<dbReference type="HOGENOM" id="CLU_044063_2_1_6"/>
<dbReference type="UniPathway" id="UPA00053">
    <property type="reaction ID" value="UER00087"/>
</dbReference>
<dbReference type="GO" id="GO:0005829">
    <property type="term" value="C:cytosol"/>
    <property type="evidence" value="ECO:0007669"/>
    <property type="project" value="TreeGrafter"/>
</dbReference>
<dbReference type="GO" id="GO:0050661">
    <property type="term" value="F:NADP binding"/>
    <property type="evidence" value="ECO:0007669"/>
    <property type="project" value="InterPro"/>
</dbReference>
<dbReference type="GO" id="GO:0004764">
    <property type="term" value="F:shikimate 3-dehydrogenase (NADP+) activity"/>
    <property type="evidence" value="ECO:0007669"/>
    <property type="project" value="UniProtKB-UniRule"/>
</dbReference>
<dbReference type="GO" id="GO:0008652">
    <property type="term" value="P:amino acid biosynthetic process"/>
    <property type="evidence" value="ECO:0007669"/>
    <property type="project" value="UniProtKB-KW"/>
</dbReference>
<dbReference type="GO" id="GO:0009073">
    <property type="term" value="P:aromatic amino acid family biosynthetic process"/>
    <property type="evidence" value="ECO:0007669"/>
    <property type="project" value="UniProtKB-KW"/>
</dbReference>
<dbReference type="GO" id="GO:0009423">
    <property type="term" value="P:chorismate biosynthetic process"/>
    <property type="evidence" value="ECO:0007669"/>
    <property type="project" value="UniProtKB-UniRule"/>
</dbReference>
<dbReference type="GO" id="GO:0019632">
    <property type="term" value="P:shikimate metabolic process"/>
    <property type="evidence" value="ECO:0007669"/>
    <property type="project" value="InterPro"/>
</dbReference>
<dbReference type="CDD" id="cd01065">
    <property type="entry name" value="NAD_bind_Shikimate_DH"/>
    <property type="match status" value="1"/>
</dbReference>
<dbReference type="FunFam" id="3.40.50.10860:FF:000006">
    <property type="entry name" value="Shikimate dehydrogenase (NADP(+))"/>
    <property type="match status" value="1"/>
</dbReference>
<dbReference type="FunFam" id="3.40.50.720:FF:000104">
    <property type="entry name" value="Shikimate dehydrogenase (NADP(+))"/>
    <property type="match status" value="1"/>
</dbReference>
<dbReference type="Gene3D" id="3.40.50.10860">
    <property type="entry name" value="Leucine Dehydrogenase, chain A, domain 1"/>
    <property type="match status" value="1"/>
</dbReference>
<dbReference type="Gene3D" id="3.40.50.720">
    <property type="entry name" value="NAD(P)-binding Rossmann-like Domain"/>
    <property type="match status" value="1"/>
</dbReference>
<dbReference type="HAMAP" id="MF_00222">
    <property type="entry name" value="Shikimate_DH_AroE"/>
    <property type="match status" value="1"/>
</dbReference>
<dbReference type="InterPro" id="IPR046346">
    <property type="entry name" value="Aminoacid_DH-like_N_sf"/>
</dbReference>
<dbReference type="InterPro" id="IPR036291">
    <property type="entry name" value="NAD(P)-bd_dom_sf"/>
</dbReference>
<dbReference type="InterPro" id="IPR041121">
    <property type="entry name" value="SDH_C"/>
</dbReference>
<dbReference type="InterPro" id="IPR011342">
    <property type="entry name" value="Shikimate_DH"/>
</dbReference>
<dbReference type="InterPro" id="IPR013708">
    <property type="entry name" value="Shikimate_DH-bd_N"/>
</dbReference>
<dbReference type="InterPro" id="IPR022893">
    <property type="entry name" value="Shikimate_DH_fam"/>
</dbReference>
<dbReference type="InterPro" id="IPR006151">
    <property type="entry name" value="Shikm_DH/Glu-tRNA_Rdtase"/>
</dbReference>
<dbReference type="NCBIfam" id="TIGR00507">
    <property type="entry name" value="aroE"/>
    <property type="match status" value="1"/>
</dbReference>
<dbReference type="NCBIfam" id="NF001310">
    <property type="entry name" value="PRK00258.1-2"/>
    <property type="match status" value="1"/>
</dbReference>
<dbReference type="PANTHER" id="PTHR21089:SF1">
    <property type="entry name" value="BIFUNCTIONAL 3-DEHYDROQUINATE DEHYDRATASE_SHIKIMATE DEHYDROGENASE, CHLOROPLASTIC"/>
    <property type="match status" value="1"/>
</dbReference>
<dbReference type="PANTHER" id="PTHR21089">
    <property type="entry name" value="SHIKIMATE DEHYDROGENASE"/>
    <property type="match status" value="1"/>
</dbReference>
<dbReference type="Pfam" id="PF18317">
    <property type="entry name" value="SDH_C"/>
    <property type="match status" value="1"/>
</dbReference>
<dbReference type="Pfam" id="PF01488">
    <property type="entry name" value="Shikimate_DH"/>
    <property type="match status" value="1"/>
</dbReference>
<dbReference type="Pfam" id="PF08501">
    <property type="entry name" value="Shikimate_dh_N"/>
    <property type="match status" value="1"/>
</dbReference>
<dbReference type="SUPFAM" id="SSF53223">
    <property type="entry name" value="Aminoacid dehydrogenase-like, N-terminal domain"/>
    <property type="match status" value="1"/>
</dbReference>
<dbReference type="SUPFAM" id="SSF51735">
    <property type="entry name" value="NAD(P)-binding Rossmann-fold domains"/>
    <property type="match status" value="1"/>
</dbReference>
<name>AROE_SHESM</name>
<accession>Q0HP98</accession>
<evidence type="ECO:0000255" key="1">
    <source>
        <dbReference type="HAMAP-Rule" id="MF_00222"/>
    </source>
</evidence>
<reference key="1">
    <citation type="submission" date="2006-08" db="EMBL/GenBank/DDBJ databases">
        <title>Complete sequence of Shewanella sp. MR-4.</title>
        <authorList>
            <consortium name="US DOE Joint Genome Institute"/>
            <person name="Copeland A."/>
            <person name="Lucas S."/>
            <person name="Lapidus A."/>
            <person name="Barry K."/>
            <person name="Detter J.C."/>
            <person name="Glavina del Rio T."/>
            <person name="Hammon N."/>
            <person name="Israni S."/>
            <person name="Dalin E."/>
            <person name="Tice H."/>
            <person name="Pitluck S."/>
            <person name="Kiss H."/>
            <person name="Brettin T."/>
            <person name="Bruce D."/>
            <person name="Han C."/>
            <person name="Tapia R."/>
            <person name="Gilna P."/>
            <person name="Schmutz J."/>
            <person name="Larimer F."/>
            <person name="Land M."/>
            <person name="Hauser L."/>
            <person name="Kyrpides N."/>
            <person name="Mikhailova N."/>
            <person name="Nealson K."/>
            <person name="Konstantinidis K."/>
            <person name="Klappenbach J."/>
            <person name="Tiedje J."/>
            <person name="Richardson P."/>
        </authorList>
    </citation>
    <scope>NUCLEOTIDE SEQUENCE [LARGE SCALE GENOMIC DNA]</scope>
    <source>
        <strain>MR-4</strain>
    </source>
</reference>
<gene>
    <name evidence="1" type="primary">aroE</name>
    <name type="ordered locus">Shewmr4_0037</name>
</gene>
<feature type="chain" id="PRO_0000325169" description="Shikimate dehydrogenase (NADP(+))">
    <location>
        <begin position="1"/>
        <end position="292"/>
    </location>
</feature>
<feature type="active site" description="Proton acceptor" evidence="1">
    <location>
        <position position="76"/>
    </location>
</feature>
<feature type="binding site" evidence="1">
    <location>
        <begin position="25"/>
        <end position="27"/>
    </location>
    <ligand>
        <name>shikimate</name>
        <dbReference type="ChEBI" id="CHEBI:36208"/>
    </ligand>
</feature>
<feature type="binding site" evidence="1">
    <location>
        <position position="72"/>
    </location>
    <ligand>
        <name>shikimate</name>
        <dbReference type="ChEBI" id="CHEBI:36208"/>
    </ligand>
</feature>
<feature type="binding site" evidence="1">
    <location>
        <position position="97"/>
    </location>
    <ligand>
        <name>shikimate</name>
        <dbReference type="ChEBI" id="CHEBI:36208"/>
    </ligand>
</feature>
<feature type="binding site" evidence="1">
    <location>
        <position position="113"/>
    </location>
    <ligand>
        <name>shikimate</name>
        <dbReference type="ChEBI" id="CHEBI:36208"/>
    </ligand>
</feature>
<feature type="binding site" evidence="1">
    <location>
        <begin position="137"/>
        <end position="141"/>
    </location>
    <ligand>
        <name>NADP(+)</name>
        <dbReference type="ChEBI" id="CHEBI:58349"/>
    </ligand>
</feature>
<feature type="binding site" evidence="1">
    <location>
        <begin position="161"/>
        <end position="166"/>
    </location>
    <ligand>
        <name>NADP(+)</name>
        <dbReference type="ChEBI" id="CHEBI:58349"/>
    </ligand>
</feature>
<feature type="binding site" evidence="1">
    <location>
        <position position="230"/>
    </location>
    <ligand>
        <name>NADP(+)</name>
        <dbReference type="ChEBI" id="CHEBI:58349"/>
    </ligand>
</feature>
<feature type="binding site" evidence="1">
    <location>
        <position position="232"/>
    </location>
    <ligand>
        <name>shikimate</name>
        <dbReference type="ChEBI" id="CHEBI:36208"/>
    </ligand>
</feature>
<feature type="binding site" evidence="1">
    <location>
        <position position="254"/>
    </location>
    <ligand>
        <name>NADP(+)</name>
        <dbReference type="ChEBI" id="CHEBI:58349"/>
    </ligand>
</feature>